<accession>A2BNE2</accession>
<evidence type="ECO:0000255" key="1">
    <source>
        <dbReference type="HAMAP-Rule" id="MF_01151"/>
    </source>
</evidence>
<evidence type="ECO:0000256" key="2">
    <source>
        <dbReference type="SAM" id="MobiDB-lite"/>
    </source>
</evidence>
<reference key="1">
    <citation type="journal article" date="2007" name="PLoS Genet.">
        <title>Patterns and implications of gene gain and loss in the evolution of Prochlorococcus.</title>
        <authorList>
            <person name="Kettler G.C."/>
            <person name="Martiny A.C."/>
            <person name="Huang K."/>
            <person name="Zucker J."/>
            <person name="Coleman M.L."/>
            <person name="Rodrigue S."/>
            <person name="Chen F."/>
            <person name="Lapidus A."/>
            <person name="Ferriera S."/>
            <person name="Johnson J."/>
            <person name="Steglich C."/>
            <person name="Church G.M."/>
            <person name="Richardson P."/>
            <person name="Chisholm S.W."/>
        </authorList>
    </citation>
    <scope>NUCLEOTIDE SEQUENCE [LARGE SCALE GENOMIC DNA]</scope>
    <source>
        <strain>AS9601</strain>
    </source>
</reference>
<protein>
    <recommendedName>
        <fullName evidence="1">Protein GrpE</fullName>
    </recommendedName>
    <alternativeName>
        <fullName evidence="1">HSP-70 cofactor</fullName>
    </alternativeName>
</protein>
<name>GRPE_PROMS</name>
<gene>
    <name evidence="1" type="primary">grpE</name>
    <name type="ordered locus">A9601_00151</name>
</gene>
<sequence length="239" mass="27528">MIENQSDNIDNKENDLSDQDNALENVSSAQELTTENNELSSQKTEEINTEELKNSISNNDARLEQLEKEHETLKNQYVRISADFDNFRKRQSRDQDDLKIQLVSKTLTAILPIVDNFERARQQLKPESEEAQSLHRSYQGLYKQLVEVLKQQGVSPMRVVGQQFDPSLHEAVLREPSEKFEEDFIIEELQRGYHLEGKVLRHALVKVSMGPGKQNSQEEVEKDKVEGDIDSEENTSEDV</sequence>
<dbReference type="EMBL" id="CP000551">
    <property type="protein sequence ID" value="ABM69303.1"/>
    <property type="molecule type" value="Genomic_DNA"/>
</dbReference>
<dbReference type="RefSeq" id="WP_011817493.1">
    <property type="nucleotide sequence ID" value="NC_008816.1"/>
</dbReference>
<dbReference type="SMR" id="A2BNE2"/>
<dbReference type="STRING" id="146891.A9601_00151"/>
<dbReference type="KEGG" id="pmb:A9601_00151"/>
<dbReference type="eggNOG" id="COG0576">
    <property type="taxonomic scope" value="Bacteria"/>
</dbReference>
<dbReference type="HOGENOM" id="CLU_057217_5_1_3"/>
<dbReference type="OrthoDB" id="9812586at2"/>
<dbReference type="Proteomes" id="UP000002590">
    <property type="component" value="Chromosome"/>
</dbReference>
<dbReference type="GO" id="GO:0005737">
    <property type="term" value="C:cytoplasm"/>
    <property type="evidence" value="ECO:0007669"/>
    <property type="project" value="UniProtKB-SubCell"/>
</dbReference>
<dbReference type="GO" id="GO:0000774">
    <property type="term" value="F:adenyl-nucleotide exchange factor activity"/>
    <property type="evidence" value="ECO:0007669"/>
    <property type="project" value="InterPro"/>
</dbReference>
<dbReference type="GO" id="GO:0042803">
    <property type="term" value="F:protein homodimerization activity"/>
    <property type="evidence" value="ECO:0007669"/>
    <property type="project" value="InterPro"/>
</dbReference>
<dbReference type="GO" id="GO:0051087">
    <property type="term" value="F:protein-folding chaperone binding"/>
    <property type="evidence" value="ECO:0007669"/>
    <property type="project" value="InterPro"/>
</dbReference>
<dbReference type="GO" id="GO:0051082">
    <property type="term" value="F:unfolded protein binding"/>
    <property type="evidence" value="ECO:0007669"/>
    <property type="project" value="TreeGrafter"/>
</dbReference>
<dbReference type="GO" id="GO:0006457">
    <property type="term" value="P:protein folding"/>
    <property type="evidence" value="ECO:0007669"/>
    <property type="project" value="InterPro"/>
</dbReference>
<dbReference type="CDD" id="cd00446">
    <property type="entry name" value="GrpE"/>
    <property type="match status" value="1"/>
</dbReference>
<dbReference type="FunFam" id="2.30.22.10:FF:000001">
    <property type="entry name" value="Protein GrpE"/>
    <property type="match status" value="1"/>
</dbReference>
<dbReference type="Gene3D" id="3.90.20.20">
    <property type="match status" value="1"/>
</dbReference>
<dbReference type="Gene3D" id="2.30.22.10">
    <property type="entry name" value="Head domain of nucleotide exchange factor GrpE"/>
    <property type="match status" value="1"/>
</dbReference>
<dbReference type="HAMAP" id="MF_01151">
    <property type="entry name" value="GrpE"/>
    <property type="match status" value="1"/>
</dbReference>
<dbReference type="InterPro" id="IPR000740">
    <property type="entry name" value="GrpE"/>
</dbReference>
<dbReference type="InterPro" id="IPR013805">
    <property type="entry name" value="GrpE_coiled_coil"/>
</dbReference>
<dbReference type="InterPro" id="IPR009012">
    <property type="entry name" value="GrpE_head"/>
</dbReference>
<dbReference type="NCBIfam" id="NF010738">
    <property type="entry name" value="PRK14140.1"/>
    <property type="match status" value="1"/>
</dbReference>
<dbReference type="NCBIfam" id="NF010741">
    <property type="entry name" value="PRK14143.1"/>
    <property type="match status" value="1"/>
</dbReference>
<dbReference type="PANTHER" id="PTHR21237">
    <property type="entry name" value="GRPE PROTEIN"/>
    <property type="match status" value="1"/>
</dbReference>
<dbReference type="PANTHER" id="PTHR21237:SF23">
    <property type="entry name" value="GRPE PROTEIN HOMOLOG, MITOCHONDRIAL"/>
    <property type="match status" value="1"/>
</dbReference>
<dbReference type="Pfam" id="PF01025">
    <property type="entry name" value="GrpE"/>
    <property type="match status" value="1"/>
</dbReference>
<dbReference type="PRINTS" id="PR00773">
    <property type="entry name" value="GRPEPROTEIN"/>
</dbReference>
<dbReference type="SUPFAM" id="SSF58014">
    <property type="entry name" value="Coiled-coil domain of nucleotide exchange factor GrpE"/>
    <property type="match status" value="1"/>
</dbReference>
<dbReference type="SUPFAM" id="SSF51064">
    <property type="entry name" value="Head domain of nucleotide exchange factor GrpE"/>
    <property type="match status" value="1"/>
</dbReference>
<dbReference type="PROSITE" id="PS01071">
    <property type="entry name" value="GRPE"/>
    <property type="match status" value="1"/>
</dbReference>
<keyword id="KW-0143">Chaperone</keyword>
<keyword id="KW-0963">Cytoplasm</keyword>
<keyword id="KW-0346">Stress response</keyword>
<feature type="chain" id="PRO_1000053617" description="Protein GrpE">
    <location>
        <begin position="1"/>
        <end position="239"/>
    </location>
</feature>
<feature type="region of interest" description="Disordered" evidence="2">
    <location>
        <begin position="1"/>
        <end position="54"/>
    </location>
</feature>
<feature type="region of interest" description="Disordered" evidence="2">
    <location>
        <begin position="208"/>
        <end position="239"/>
    </location>
</feature>
<feature type="compositionally biased region" description="Polar residues" evidence="2">
    <location>
        <begin position="19"/>
        <end position="42"/>
    </location>
</feature>
<feature type="compositionally biased region" description="Basic and acidic residues" evidence="2">
    <location>
        <begin position="43"/>
        <end position="53"/>
    </location>
</feature>
<feature type="compositionally biased region" description="Acidic residues" evidence="2">
    <location>
        <begin position="228"/>
        <end position="239"/>
    </location>
</feature>
<organism>
    <name type="scientific">Prochlorococcus marinus (strain AS9601)</name>
    <dbReference type="NCBI Taxonomy" id="146891"/>
    <lineage>
        <taxon>Bacteria</taxon>
        <taxon>Bacillati</taxon>
        <taxon>Cyanobacteriota</taxon>
        <taxon>Cyanophyceae</taxon>
        <taxon>Synechococcales</taxon>
        <taxon>Prochlorococcaceae</taxon>
        <taxon>Prochlorococcus</taxon>
    </lineage>
</organism>
<comment type="function">
    <text evidence="1">Participates actively in the response to hyperosmotic and heat shock by preventing the aggregation of stress-denatured proteins, in association with DnaK and GrpE. It is the nucleotide exchange factor for DnaK and may function as a thermosensor. Unfolded proteins bind initially to DnaJ; upon interaction with the DnaJ-bound protein, DnaK hydrolyzes its bound ATP, resulting in the formation of a stable complex. GrpE releases ADP from DnaK; ATP binding to DnaK triggers the release of the substrate protein, thus completing the reaction cycle. Several rounds of ATP-dependent interactions between DnaJ, DnaK and GrpE are required for fully efficient folding.</text>
</comment>
<comment type="subunit">
    <text evidence="1">Homodimer.</text>
</comment>
<comment type="subcellular location">
    <subcellularLocation>
        <location evidence="1">Cytoplasm</location>
    </subcellularLocation>
</comment>
<comment type="similarity">
    <text evidence="1">Belongs to the GrpE family.</text>
</comment>
<proteinExistence type="inferred from homology"/>